<feature type="initiator methionine" description="Removed" evidence="6 7">
    <location>
        <position position="1"/>
    </location>
</feature>
<feature type="chain" id="PRO_0000287457" description="G patch domain-containing protein 1">
    <location>
        <begin position="2"/>
        <end position="931"/>
    </location>
</feature>
<feature type="domain" description="G-patch" evidence="1">
    <location>
        <begin position="152"/>
        <end position="198"/>
    </location>
</feature>
<feature type="region of interest" description="Disordered" evidence="2">
    <location>
        <begin position="1"/>
        <end position="41"/>
    </location>
</feature>
<feature type="region of interest" description="Disordered" evidence="2">
    <location>
        <begin position="73"/>
        <end position="92"/>
    </location>
</feature>
<feature type="region of interest" description="Disordered" evidence="2">
    <location>
        <begin position="169"/>
        <end position="209"/>
    </location>
</feature>
<feature type="region of interest" description="Disordered" evidence="2">
    <location>
        <begin position="568"/>
        <end position="595"/>
    </location>
</feature>
<feature type="region of interest" description="Disordered" evidence="2">
    <location>
        <begin position="659"/>
        <end position="931"/>
    </location>
</feature>
<feature type="compositionally biased region" description="Basic and acidic residues" evidence="2">
    <location>
        <begin position="582"/>
        <end position="593"/>
    </location>
</feature>
<feature type="compositionally biased region" description="Polar residues" evidence="2">
    <location>
        <begin position="659"/>
        <end position="668"/>
    </location>
</feature>
<feature type="compositionally biased region" description="Basic and acidic residues" evidence="2">
    <location>
        <begin position="669"/>
        <end position="695"/>
    </location>
</feature>
<feature type="compositionally biased region" description="Acidic residues" evidence="2">
    <location>
        <begin position="769"/>
        <end position="780"/>
    </location>
</feature>
<feature type="compositionally biased region" description="Polar residues" evidence="2">
    <location>
        <begin position="786"/>
        <end position="802"/>
    </location>
</feature>
<feature type="compositionally biased region" description="Basic residues" evidence="2">
    <location>
        <begin position="852"/>
        <end position="888"/>
    </location>
</feature>
<feature type="compositionally biased region" description="Low complexity" evidence="2">
    <location>
        <begin position="896"/>
        <end position="905"/>
    </location>
</feature>
<feature type="compositionally biased region" description="Basic residues" evidence="2">
    <location>
        <begin position="922"/>
        <end position="931"/>
    </location>
</feature>
<feature type="modified residue" description="N-acetylalanine" evidence="6 7">
    <location>
        <position position="2"/>
    </location>
</feature>
<feature type="modified residue" description="Phosphoserine" evidence="6 7 8">
    <location>
        <position position="6"/>
    </location>
</feature>
<feature type="modified residue" description="Phosphoserine" evidence="6 7">
    <location>
        <position position="8"/>
    </location>
</feature>
<feature type="modified residue" description="Phosphoserine" evidence="8">
    <location>
        <position position="357"/>
    </location>
</feature>
<feature type="modified residue" description="Phosphoserine" evidence="8">
    <location>
        <position position="477"/>
    </location>
</feature>
<feature type="modified residue" description="Phosphoserine" evidence="8">
    <location>
        <position position="715"/>
    </location>
</feature>
<feature type="cross-link" description="Glycyl lysine isopeptide (Lys-Gly) (interchain with G-Cter in SUMO2)" evidence="9">
    <location>
        <position position="312"/>
    </location>
</feature>
<feature type="sequence variant" id="VAR_032303" description="In dbSNP:rs2287679." evidence="4">
    <original>L</original>
    <variation>P</variation>
    <location>
        <position position="476"/>
    </location>
</feature>
<feature type="sequence variant" id="VAR_051014" description="In dbSNP:rs16967805.">
    <original>L</original>
    <variation>S</variation>
    <location>
        <position position="520"/>
    </location>
</feature>
<feature type="sequence variant" id="VAR_059657" description="In dbSNP:rs35389599.">
    <original>D</original>
    <variation>E</variation>
    <location>
        <position position="631"/>
    </location>
</feature>
<feature type="sequence variant" id="VAR_032304" description="In dbSNP:rs10416265." evidence="4">
    <original>H</original>
    <variation>R</variation>
    <location>
        <position position="724"/>
    </location>
</feature>
<feature type="sequence variant" id="VAR_032305" description="In dbSNP:rs10421769." evidence="3 4">
    <original>L</original>
    <variation>S</variation>
    <location>
        <position position="728"/>
    </location>
</feature>
<feature type="sequence variant" id="VAR_032306" description="In dbSNP:rs16967824.">
    <original>E</original>
    <variation>K</variation>
    <location>
        <position position="909"/>
    </location>
</feature>
<feature type="sequence conflict" description="In Ref. 4; BAA91489." evidence="5" ref="4">
    <original>H</original>
    <variation>Y</variation>
    <location>
        <position position="484"/>
    </location>
</feature>
<feature type="sequence conflict" description="In Ref. 1; AAN63596." evidence="5" ref="1">
    <original>R</original>
    <variation>P</variation>
    <location>
        <position position="748"/>
    </location>
</feature>
<feature type="sequence conflict" description="In Ref. 3; CAD39124." evidence="5" ref="3">
    <original>S</original>
    <variation>L</variation>
    <location>
        <position position="800"/>
    </location>
</feature>
<sequence>MAARDSDSEEDLVSYGTGLEPLEEGERPKKPIPLQDQTVRDEKGRYKRFHGAFSGGFSAGYFNTVGSKEGWTPSTFVSSRQNRADKSVLGPEDFMDEEDLSEFGIAPKAIVTTDDFASKTKDRIREKARQLAAATAPIPGATLLDDLITPAKLSVGFELLRKMGWKEGQGVGPRVKRRPRRQKPDPGVKIYGCALPPGSSEGSEGEDDDYLPDNVTFAPKDVTPVDFTPKDNVHGLAYKGLDPHQALFGTSGEHFNLFSGGSERAGDLGEIGLNKGRKLGISGQAFGVGALEEEDDDIYATETLSKYDTVLKDEEPGDGLYGWTAPRQYKNQKESEKDLRYVGKILDGFSLASKPLSSKKIYPPPELPRDYRPVHYFRPMVAATSENSHLLQVLSESAGKATPDPGTHSKHQLNASKRAELLGETPIQGSATSVLEFLSQKDKERIKEMKQATDLKAAQLKARSLAQNAQSSRAQLSPAAAAGHCSWNMALGGGTATLKASNFKPFAKDPEKQKRYDEFLVHMKQGQKDALERCLDPSMTEWERGRERDEFARAALLYASSHSTLSSRFTHAKEEDDSDQVEVPRDQENDVGDKQSAVKMKMFGKLTRDTFEWHPDKLLCKRFNVPDPYPDSTLVGLPRVKRDKYSVFNFLTLPETASLPTTQASSEKVSQHRGPDKSRKPSRWDTSKHEKKEDSISEFLSLARSKAEPPKQQSSPLVNKEEEHAPELSANQTVNKDVDAQAEGEGSRPSMDLFRAIFASSSDEKSSSSEDEQGDSEDDQAGSGEANFQSSQDTDLGETSSVAHALVPAPQEPPPSFPIQKMQIDEREEFGPRLPPVFCPNARQTLEVPQKEKHKKNKDKHKAKKEHRRKKEKKKKHRKHKHKGKQKNKKPEKSSSSESSDSSDSQSDEETADVSPQELLRRLKSLPLRRQ</sequence>
<dbReference type="EMBL" id="AF434677">
    <property type="protein sequence ID" value="AAN63596.1"/>
    <property type="molecule type" value="mRNA"/>
</dbReference>
<dbReference type="EMBL" id="BC006108">
    <property type="protein sequence ID" value="AAH06108.1"/>
    <property type="molecule type" value="mRNA"/>
</dbReference>
<dbReference type="EMBL" id="AL834465">
    <property type="protein sequence ID" value="CAD39124.1"/>
    <property type="status" value="ALT_INIT"/>
    <property type="molecule type" value="mRNA"/>
</dbReference>
<dbReference type="EMBL" id="AK001068">
    <property type="protein sequence ID" value="BAA91489.1"/>
    <property type="status" value="ALT_INIT"/>
    <property type="molecule type" value="mRNA"/>
</dbReference>
<dbReference type="CCDS" id="CCDS12428.1"/>
<dbReference type="RefSeq" id="NP_060495.2">
    <property type="nucleotide sequence ID" value="NM_018025.2"/>
</dbReference>
<dbReference type="BioGRID" id="120406">
    <property type="interactions" value="109"/>
</dbReference>
<dbReference type="CORUM" id="Q9BRR8"/>
<dbReference type="FunCoup" id="Q9BRR8">
    <property type="interactions" value="2171"/>
</dbReference>
<dbReference type="IntAct" id="Q9BRR8">
    <property type="interactions" value="69"/>
</dbReference>
<dbReference type="MINT" id="Q9BRR8"/>
<dbReference type="STRING" id="9606.ENSP00000170564"/>
<dbReference type="GlyCosmos" id="Q9BRR8">
    <property type="glycosylation" value="1 site, 1 glycan"/>
</dbReference>
<dbReference type="GlyGen" id="Q9BRR8">
    <property type="glycosylation" value="1 site, 1 O-linked glycan (1 site)"/>
</dbReference>
<dbReference type="iPTMnet" id="Q9BRR8"/>
<dbReference type="PhosphoSitePlus" id="Q9BRR8"/>
<dbReference type="BioMuta" id="GPATCH1"/>
<dbReference type="DMDM" id="74732921"/>
<dbReference type="jPOST" id="Q9BRR8"/>
<dbReference type="MassIVE" id="Q9BRR8"/>
<dbReference type="PaxDb" id="9606-ENSP00000170564"/>
<dbReference type="PeptideAtlas" id="Q9BRR8"/>
<dbReference type="ProteomicsDB" id="78818"/>
<dbReference type="Pumba" id="Q9BRR8"/>
<dbReference type="Antibodypedia" id="28992">
    <property type="antibodies" value="19 antibodies from 7 providers"/>
</dbReference>
<dbReference type="DNASU" id="55094"/>
<dbReference type="Ensembl" id="ENST00000170564.7">
    <property type="protein sequence ID" value="ENSP00000170564.1"/>
    <property type="gene ID" value="ENSG00000076650.7"/>
</dbReference>
<dbReference type="GeneID" id="55094"/>
<dbReference type="KEGG" id="hsa:55094"/>
<dbReference type="MANE-Select" id="ENST00000170564.7">
    <property type="protein sequence ID" value="ENSP00000170564.1"/>
    <property type="RefSeq nucleotide sequence ID" value="NM_018025.3"/>
    <property type="RefSeq protein sequence ID" value="NP_060495.2"/>
</dbReference>
<dbReference type="UCSC" id="uc002nug.2">
    <property type="organism name" value="human"/>
</dbReference>
<dbReference type="AGR" id="HGNC:24658"/>
<dbReference type="CTD" id="55094"/>
<dbReference type="DisGeNET" id="55094"/>
<dbReference type="GeneCards" id="GPATCH1"/>
<dbReference type="HGNC" id="HGNC:24658">
    <property type="gene designation" value="GPATCH1"/>
</dbReference>
<dbReference type="HPA" id="ENSG00000076650">
    <property type="expression patterns" value="Low tissue specificity"/>
</dbReference>
<dbReference type="neXtProt" id="NX_Q9BRR8"/>
<dbReference type="OpenTargets" id="ENSG00000076650"/>
<dbReference type="PharmGKB" id="PA162390063"/>
<dbReference type="VEuPathDB" id="HostDB:ENSG00000076650"/>
<dbReference type="eggNOG" id="KOG2138">
    <property type="taxonomic scope" value="Eukaryota"/>
</dbReference>
<dbReference type="GeneTree" id="ENSGT00390000007074"/>
<dbReference type="HOGENOM" id="CLU_008613_2_0_1"/>
<dbReference type="InParanoid" id="Q9BRR8"/>
<dbReference type="OMA" id="QLWQQHA"/>
<dbReference type="OrthoDB" id="20507at2759"/>
<dbReference type="PAN-GO" id="Q9BRR8">
    <property type="GO annotations" value="2 GO annotations based on evolutionary models"/>
</dbReference>
<dbReference type="PhylomeDB" id="Q9BRR8"/>
<dbReference type="TreeFam" id="TF314717"/>
<dbReference type="PathwayCommons" id="Q9BRR8"/>
<dbReference type="Reactome" id="R-HSA-72163">
    <property type="pathway name" value="mRNA Splicing - Major Pathway"/>
</dbReference>
<dbReference type="SignaLink" id="Q9BRR8"/>
<dbReference type="BioGRID-ORCS" id="55094">
    <property type="hits" value="216 hits in 1167 CRISPR screens"/>
</dbReference>
<dbReference type="ChiTaRS" id="GPATCH1">
    <property type="organism name" value="human"/>
</dbReference>
<dbReference type="GenomeRNAi" id="55094"/>
<dbReference type="Pharos" id="Q9BRR8">
    <property type="development level" value="Tdark"/>
</dbReference>
<dbReference type="PRO" id="PR:Q9BRR8"/>
<dbReference type="Proteomes" id="UP000005640">
    <property type="component" value="Chromosome 19"/>
</dbReference>
<dbReference type="RNAct" id="Q9BRR8">
    <property type="molecule type" value="protein"/>
</dbReference>
<dbReference type="Bgee" id="ENSG00000076650">
    <property type="expression patterns" value="Expressed in calcaneal tendon and 172 other cell types or tissues"/>
</dbReference>
<dbReference type="ExpressionAtlas" id="Q9BRR8">
    <property type="expression patterns" value="baseline and differential"/>
</dbReference>
<dbReference type="GO" id="GO:0071013">
    <property type="term" value="C:catalytic step 2 spliceosome"/>
    <property type="evidence" value="ECO:0000314"/>
    <property type="project" value="UniProtKB"/>
</dbReference>
<dbReference type="GO" id="GO:0005654">
    <property type="term" value="C:nucleoplasm"/>
    <property type="evidence" value="ECO:0000304"/>
    <property type="project" value="Reactome"/>
</dbReference>
<dbReference type="GO" id="GO:0005634">
    <property type="term" value="C:nucleus"/>
    <property type="evidence" value="ECO:0000318"/>
    <property type="project" value="GO_Central"/>
</dbReference>
<dbReference type="GO" id="GO:0003723">
    <property type="term" value="F:RNA binding"/>
    <property type="evidence" value="ECO:0000318"/>
    <property type="project" value="GO_Central"/>
</dbReference>
<dbReference type="GO" id="GO:0000398">
    <property type="term" value="P:mRNA splicing, via spliceosome"/>
    <property type="evidence" value="ECO:0000305"/>
    <property type="project" value="UniProtKB"/>
</dbReference>
<dbReference type="InterPro" id="IPR011666">
    <property type="entry name" value="DUF1604"/>
</dbReference>
<dbReference type="InterPro" id="IPR000467">
    <property type="entry name" value="G_patch_dom"/>
</dbReference>
<dbReference type="PANTHER" id="PTHR13384">
    <property type="entry name" value="G PATCH DOMAIN-CONTAINING PROTEIN 1"/>
    <property type="match status" value="1"/>
</dbReference>
<dbReference type="PANTHER" id="PTHR13384:SF19">
    <property type="entry name" value="G PATCH DOMAIN-CONTAINING PROTEIN 1"/>
    <property type="match status" value="1"/>
</dbReference>
<dbReference type="Pfam" id="PF07713">
    <property type="entry name" value="DUF1604"/>
    <property type="match status" value="1"/>
</dbReference>
<dbReference type="Pfam" id="PF01585">
    <property type="entry name" value="G-patch"/>
    <property type="match status" value="1"/>
</dbReference>
<dbReference type="PROSITE" id="PS50174">
    <property type="entry name" value="G_PATCH"/>
    <property type="match status" value="1"/>
</dbReference>
<comment type="similarity">
    <text evidence="5">Belongs to the GPATCH1 family.</text>
</comment>
<comment type="sequence caution" evidence="5">
    <conflict type="erroneous initiation">
        <sequence resource="EMBL-CDS" id="BAA91489"/>
    </conflict>
</comment>
<comment type="sequence caution" evidence="5">
    <conflict type="erroneous initiation">
        <sequence resource="EMBL-CDS" id="CAD39124"/>
    </conflict>
</comment>
<gene>
    <name type="primary">GPATCH1</name>
    <name type="synonym">ECGP</name>
    <name type="synonym">GPATC1</name>
</gene>
<name>GPTC1_HUMAN</name>
<proteinExistence type="evidence at protein level"/>
<organism>
    <name type="scientific">Homo sapiens</name>
    <name type="common">Human</name>
    <dbReference type="NCBI Taxonomy" id="9606"/>
    <lineage>
        <taxon>Eukaryota</taxon>
        <taxon>Metazoa</taxon>
        <taxon>Chordata</taxon>
        <taxon>Craniata</taxon>
        <taxon>Vertebrata</taxon>
        <taxon>Euteleostomi</taxon>
        <taxon>Mammalia</taxon>
        <taxon>Eutheria</taxon>
        <taxon>Euarchontoglires</taxon>
        <taxon>Primates</taxon>
        <taxon>Haplorrhini</taxon>
        <taxon>Catarrhini</taxon>
        <taxon>Hominidae</taxon>
        <taxon>Homo</taxon>
    </lineage>
</organism>
<accession>Q9BRR8</accession>
<accession>Q8IZV6</accession>
<accession>Q8N3B7</accession>
<accession>Q9NW94</accession>
<reference key="1">
    <citation type="submission" date="2001-10" db="EMBL/GenBank/DDBJ databases">
        <title>Cloning of an evolutionarily conserved G-patch domain containing protein.</title>
        <authorList>
            <person name="Luallen R.J."/>
            <person name="Sargeant R."/>
            <person name="Geng Y."/>
        </authorList>
    </citation>
    <scope>NUCLEOTIDE SEQUENCE [MRNA]</scope>
    <source>
        <tissue>Urinary bladder</tissue>
    </source>
</reference>
<reference key="2">
    <citation type="journal article" date="2004" name="Genome Res.">
        <title>The status, quality, and expansion of the NIH full-length cDNA project: the Mammalian Gene Collection (MGC).</title>
        <authorList>
            <consortium name="The MGC Project Team"/>
        </authorList>
    </citation>
    <scope>NUCLEOTIDE SEQUENCE [LARGE SCALE MRNA]</scope>
    <source>
        <tissue>Muscle</tissue>
    </source>
</reference>
<reference key="3">
    <citation type="journal article" date="2007" name="BMC Genomics">
        <title>The full-ORF clone resource of the German cDNA consortium.</title>
        <authorList>
            <person name="Bechtel S."/>
            <person name="Rosenfelder H."/>
            <person name="Duda A."/>
            <person name="Schmidt C.P."/>
            <person name="Ernst U."/>
            <person name="Wellenreuther R."/>
            <person name="Mehrle A."/>
            <person name="Schuster C."/>
            <person name="Bahr A."/>
            <person name="Bloecker H."/>
            <person name="Heubner D."/>
            <person name="Hoerlein A."/>
            <person name="Michel G."/>
            <person name="Wedler H."/>
            <person name="Koehrer K."/>
            <person name="Ottenwaelder B."/>
            <person name="Poustka A."/>
            <person name="Wiemann S."/>
            <person name="Schupp I."/>
        </authorList>
    </citation>
    <scope>NUCLEOTIDE SEQUENCE [LARGE SCALE MRNA] OF 3-931</scope>
    <scope>VARIANTS PRO-476; ARG-724 AND SER-728</scope>
    <source>
        <tissue>Melanoma</tissue>
    </source>
</reference>
<reference key="4">
    <citation type="journal article" date="2004" name="Nat. Genet.">
        <title>Complete sequencing and characterization of 21,243 full-length human cDNAs.</title>
        <authorList>
            <person name="Ota T."/>
            <person name="Suzuki Y."/>
            <person name="Nishikawa T."/>
            <person name="Otsuki T."/>
            <person name="Sugiyama T."/>
            <person name="Irie R."/>
            <person name="Wakamatsu A."/>
            <person name="Hayashi K."/>
            <person name="Sato H."/>
            <person name="Nagai K."/>
            <person name="Kimura K."/>
            <person name="Makita H."/>
            <person name="Sekine M."/>
            <person name="Obayashi M."/>
            <person name="Nishi T."/>
            <person name="Shibahara T."/>
            <person name="Tanaka T."/>
            <person name="Ishii S."/>
            <person name="Yamamoto J."/>
            <person name="Saito K."/>
            <person name="Kawai Y."/>
            <person name="Isono Y."/>
            <person name="Nakamura Y."/>
            <person name="Nagahari K."/>
            <person name="Murakami K."/>
            <person name="Yasuda T."/>
            <person name="Iwayanagi T."/>
            <person name="Wagatsuma M."/>
            <person name="Shiratori A."/>
            <person name="Sudo H."/>
            <person name="Hosoiri T."/>
            <person name="Kaku Y."/>
            <person name="Kodaira H."/>
            <person name="Kondo H."/>
            <person name="Sugawara M."/>
            <person name="Takahashi M."/>
            <person name="Kanda K."/>
            <person name="Yokoi T."/>
            <person name="Furuya T."/>
            <person name="Kikkawa E."/>
            <person name="Omura Y."/>
            <person name="Abe K."/>
            <person name="Kamihara K."/>
            <person name="Katsuta N."/>
            <person name="Sato K."/>
            <person name="Tanikawa M."/>
            <person name="Yamazaki M."/>
            <person name="Ninomiya K."/>
            <person name="Ishibashi T."/>
            <person name="Yamashita H."/>
            <person name="Murakawa K."/>
            <person name="Fujimori K."/>
            <person name="Tanai H."/>
            <person name="Kimata M."/>
            <person name="Watanabe M."/>
            <person name="Hiraoka S."/>
            <person name="Chiba Y."/>
            <person name="Ishida S."/>
            <person name="Ono Y."/>
            <person name="Takiguchi S."/>
            <person name="Watanabe S."/>
            <person name="Yosida M."/>
            <person name="Hotuta T."/>
            <person name="Kusano J."/>
            <person name="Kanehori K."/>
            <person name="Takahashi-Fujii A."/>
            <person name="Hara H."/>
            <person name="Tanase T.-O."/>
            <person name="Nomura Y."/>
            <person name="Togiya S."/>
            <person name="Komai F."/>
            <person name="Hara R."/>
            <person name="Takeuchi K."/>
            <person name="Arita M."/>
            <person name="Imose N."/>
            <person name="Musashino K."/>
            <person name="Yuuki H."/>
            <person name="Oshima A."/>
            <person name="Sasaki N."/>
            <person name="Aotsuka S."/>
            <person name="Yoshikawa Y."/>
            <person name="Matsunawa H."/>
            <person name="Ichihara T."/>
            <person name="Shiohata N."/>
            <person name="Sano S."/>
            <person name="Moriya S."/>
            <person name="Momiyama H."/>
            <person name="Satoh N."/>
            <person name="Takami S."/>
            <person name="Terashima Y."/>
            <person name="Suzuki O."/>
            <person name="Nakagawa S."/>
            <person name="Senoh A."/>
            <person name="Mizoguchi H."/>
            <person name="Goto Y."/>
            <person name="Shimizu F."/>
            <person name="Wakebe H."/>
            <person name="Hishigaki H."/>
            <person name="Watanabe T."/>
            <person name="Sugiyama A."/>
            <person name="Takemoto M."/>
            <person name="Kawakami B."/>
            <person name="Yamazaki M."/>
            <person name="Watanabe K."/>
            <person name="Kumagai A."/>
            <person name="Itakura S."/>
            <person name="Fukuzumi Y."/>
            <person name="Fujimori Y."/>
            <person name="Komiyama M."/>
            <person name="Tashiro H."/>
            <person name="Tanigami A."/>
            <person name="Fujiwara T."/>
            <person name="Ono T."/>
            <person name="Yamada K."/>
            <person name="Fujii Y."/>
            <person name="Ozaki K."/>
            <person name="Hirao M."/>
            <person name="Ohmori Y."/>
            <person name="Kawabata A."/>
            <person name="Hikiji T."/>
            <person name="Kobatake N."/>
            <person name="Inagaki H."/>
            <person name="Ikema Y."/>
            <person name="Okamoto S."/>
            <person name="Okitani R."/>
            <person name="Kawakami T."/>
            <person name="Noguchi S."/>
            <person name="Itoh T."/>
            <person name="Shigeta K."/>
            <person name="Senba T."/>
            <person name="Matsumura K."/>
            <person name="Nakajima Y."/>
            <person name="Mizuno T."/>
            <person name="Morinaga M."/>
            <person name="Sasaki M."/>
            <person name="Togashi T."/>
            <person name="Oyama M."/>
            <person name="Hata H."/>
            <person name="Watanabe M."/>
            <person name="Komatsu T."/>
            <person name="Mizushima-Sugano J."/>
            <person name="Satoh T."/>
            <person name="Shirai Y."/>
            <person name="Takahashi Y."/>
            <person name="Nakagawa K."/>
            <person name="Okumura K."/>
            <person name="Nagase T."/>
            <person name="Nomura N."/>
            <person name="Kikuchi H."/>
            <person name="Masuho Y."/>
            <person name="Yamashita R."/>
            <person name="Nakai K."/>
            <person name="Yada T."/>
            <person name="Nakamura Y."/>
            <person name="Ohara O."/>
            <person name="Isogai T."/>
            <person name="Sugano S."/>
        </authorList>
    </citation>
    <scope>NUCLEOTIDE SEQUENCE [LARGE SCALE MRNA] OF 434-931</scope>
    <scope>VARIANT SER-728</scope>
    <source>
        <tissue>Embryo</tissue>
    </source>
</reference>
<reference key="5">
    <citation type="journal article" date="2006" name="Cell">
        <title>Global, in vivo, and site-specific phosphorylation dynamics in signaling networks.</title>
        <authorList>
            <person name="Olsen J.V."/>
            <person name="Blagoev B."/>
            <person name="Gnad F."/>
            <person name="Macek B."/>
            <person name="Kumar C."/>
            <person name="Mortensen P."/>
            <person name="Mann M."/>
        </authorList>
    </citation>
    <scope>IDENTIFICATION BY MASS SPECTROMETRY [LARGE SCALE ANALYSIS]</scope>
    <source>
        <tissue>Cervix carcinoma</tissue>
    </source>
</reference>
<reference key="6">
    <citation type="journal article" date="2010" name="Sci. Signal.">
        <title>Quantitative phosphoproteomics reveals widespread full phosphorylation site occupancy during mitosis.</title>
        <authorList>
            <person name="Olsen J.V."/>
            <person name="Vermeulen M."/>
            <person name="Santamaria A."/>
            <person name="Kumar C."/>
            <person name="Miller M.L."/>
            <person name="Jensen L.J."/>
            <person name="Gnad F."/>
            <person name="Cox J."/>
            <person name="Jensen T.S."/>
            <person name="Nigg E.A."/>
            <person name="Brunak S."/>
            <person name="Mann M."/>
        </authorList>
    </citation>
    <scope>ACETYLATION [LARGE SCALE ANALYSIS] AT ALA-2</scope>
    <scope>PHOSPHORYLATION [LARGE SCALE ANALYSIS] AT SER-6 AND SER-8</scope>
    <scope>CLEAVAGE OF INITIATOR METHIONINE [LARGE SCALE ANALYSIS]</scope>
    <scope>IDENTIFICATION BY MASS SPECTROMETRY [LARGE SCALE ANALYSIS]</scope>
    <source>
        <tissue>Cervix carcinoma</tissue>
    </source>
</reference>
<reference key="7">
    <citation type="journal article" date="2011" name="Sci. Signal.">
        <title>System-wide temporal characterization of the proteome and phosphoproteome of human embryonic stem cell differentiation.</title>
        <authorList>
            <person name="Rigbolt K.T."/>
            <person name="Prokhorova T.A."/>
            <person name="Akimov V."/>
            <person name="Henningsen J."/>
            <person name="Johansen P.T."/>
            <person name="Kratchmarova I."/>
            <person name="Kassem M."/>
            <person name="Mann M."/>
            <person name="Olsen J.V."/>
            <person name="Blagoev B."/>
        </authorList>
    </citation>
    <scope>ACETYLATION [LARGE SCALE ANALYSIS] AT ALA-2</scope>
    <scope>PHOSPHORYLATION [LARGE SCALE ANALYSIS] AT SER-6 AND SER-8</scope>
    <scope>CLEAVAGE OF INITIATOR METHIONINE [LARGE SCALE ANALYSIS]</scope>
    <scope>IDENTIFICATION BY MASS SPECTROMETRY [LARGE SCALE ANALYSIS]</scope>
</reference>
<reference key="8">
    <citation type="journal article" date="2013" name="J. Proteome Res.">
        <title>Toward a comprehensive characterization of a human cancer cell phosphoproteome.</title>
        <authorList>
            <person name="Zhou H."/>
            <person name="Di Palma S."/>
            <person name="Preisinger C."/>
            <person name="Peng M."/>
            <person name="Polat A.N."/>
            <person name="Heck A.J."/>
            <person name="Mohammed S."/>
        </authorList>
    </citation>
    <scope>PHOSPHORYLATION [LARGE SCALE ANALYSIS] AT SER-6; SER-357; SER-477 AND SER-715</scope>
    <scope>IDENTIFICATION BY MASS SPECTROMETRY [LARGE SCALE ANALYSIS]</scope>
    <source>
        <tissue>Erythroleukemia</tissue>
    </source>
</reference>
<reference key="9">
    <citation type="journal article" date="2017" name="Nat. Struct. Mol. Biol.">
        <title>Site-specific mapping of the human SUMO proteome reveals co-modification with phosphorylation.</title>
        <authorList>
            <person name="Hendriks I.A."/>
            <person name="Lyon D."/>
            <person name="Young C."/>
            <person name="Jensen L.J."/>
            <person name="Vertegaal A.C."/>
            <person name="Nielsen M.L."/>
        </authorList>
    </citation>
    <scope>SUMOYLATION [LARGE SCALE ANALYSIS] AT LYS-312</scope>
    <scope>IDENTIFICATION BY MASS SPECTROMETRY [LARGE SCALE ANALYSIS]</scope>
</reference>
<keyword id="KW-0007">Acetylation</keyword>
<keyword id="KW-1017">Isopeptide bond</keyword>
<keyword id="KW-0597">Phosphoprotein</keyword>
<keyword id="KW-1267">Proteomics identification</keyword>
<keyword id="KW-1185">Reference proteome</keyword>
<keyword id="KW-0832">Ubl conjugation</keyword>
<protein>
    <recommendedName>
        <fullName>G patch domain-containing protein 1</fullName>
    </recommendedName>
    <alternativeName>
        <fullName>Evolutionarily conserved G-patch domain-containing protein</fullName>
    </alternativeName>
</protein>
<evidence type="ECO:0000255" key="1">
    <source>
        <dbReference type="PROSITE-ProRule" id="PRU00092"/>
    </source>
</evidence>
<evidence type="ECO:0000256" key="2">
    <source>
        <dbReference type="SAM" id="MobiDB-lite"/>
    </source>
</evidence>
<evidence type="ECO:0000269" key="3">
    <source>
    </source>
</evidence>
<evidence type="ECO:0000269" key="4">
    <source>
    </source>
</evidence>
<evidence type="ECO:0000305" key="5"/>
<evidence type="ECO:0007744" key="6">
    <source>
    </source>
</evidence>
<evidence type="ECO:0007744" key="7">
    <source>
    </source>
</evidence>
<evidence type="ECO:0007744" key="8">
    <source>
    </source>
</evidence>
<evidence type="ECO:0007744" key="9">
    <source>
    </source>
</evidence>